<sequence>MDPRNTAMLGLGSDSEGFSRKSPSAISTGTLVSKREVELEKNTKEEEDLRKRNRERNIEAGKDDGLTDAQQQFSVKETNFSEGNLKLKIGLQAKRTKKPPKNLENYVCRPAIKTTIKHPRKALKSGKMTDEKNEHCPSKRDPSKLYKKADDVAAIECQSEEVIRLHSQGENNPLSKKLSPVHSEMADYINATPSTLLGSRDPDLKDRALLNGGTSVTEKLAQLIATCPPSKSSKTKPKKLGTGTTAGLVSKDLIRKAGVGSVAGIIHKDLIKKPTISTAVGLVTKDPGKKPVFNAAVGLVNKDSVKKLGTGTTAVFINKNLGKKPGTITTVGLLSKDSGKKLGIGIVPGLVHKESGKKLGLGTVVGLVNKDLGKKLGSTVGLVAKDCAKKIVASSAMGLVNKDIGKKLMSCPLAGLISKDAINLKAEALLPTQEPLKASCSTNINNQESQELSESLKDSATSKTFEKNVVRQNKESILEKFSVRKEIINLEKEMFNEGTCIQQDSFSSSEKGSYETSKHEKQPPVYCTSPDFKMGGASDVSTAKSPFSAVGESNLPSPSPTVSVNPLTRSPPETSSQLAPNPLLLSSTTELIEEISESVGKNQFTSESTHLNVGHRSVGHSISIECKGIDKEVNDSKTTHIDIPRISSSLGKKPSLTSESSIHTITPSVVNFTSLFSNKPFLKLGAVSASDKHCQVAESLSTSLQSKPLKKRKGRKPRWTKVVARSTCRSPKGLELERSELFKNVSCSSLSNSNSEPAKFMKNIGPPSFVDHDFLKRRLPKLSKSTAPSLALLADSEKPSHKSFATHKLSSSMCVSSDLLSDIYKPKRGRPKSKEMPQLEGPPKRTLKIPASKVFSLQSKEEQEPPILQPEIEIPSFKQGLSVSPFPKKRGRPKRQMRSPVKMKPPVLSVAPFVATESPSKLESESDNHRSSSDFFESEDQLQDPDDLDDSHRPSVCSMSDLEMEPDKKITKRNNGQLMKTIIRKINKMKTLKRKKLLNQILSSSVESSNKGKVQSKLHNTVSSLAATFGSKLGQQINVSKKGTIYIGKRRGRKPKTVLNGILSGSPTSLAVLEQTAQQAAGSALGQILPPLLPSSASSSEILPSPICSQSSGTSGGQSPVSSDAGFVEPSSVPYLHLHSRQGSMIQTLAMKKASKGRRRLSPPTLLPNSPSHLSELTSLKEATPSPISESHSDETIPSDSGIGTDNNSTSDRAEKFCGQKKRRHSFEHVSLIPPETSTVLSSLKEKHKHKCKRRNHDYLSYDKMKRQKRKRKKKYPQLRNRQDPDFIAELEELISRLSEIRITHRSHHFIPRDLLPTIFRINFNSFYTHPSFPLDPLHYIRKPDLKKKRGRPPKMREAMAEMPFMHSLSFPLSSTGFYPSYGMPYSPSPLTAAPIGLGYYGRYPPTLYPPPPSPSFTTPLPPPSYMHAGHLLLNPAKYHKKKHKLLRQEAFLTTSRTPLLSMSTYPSVPPEMAYGWMVEHKHRHRHKHREHRSSEQPQVSMDTGSSRSVLESLKRYRFGKDAVGERYKHKEKHRCHMSCPHLSPSKSLINREEQWVHREPSESSPLALGLQTPLQIDCSESSPSLSLGGFTPNSEPASSDEHTNLFTSAIGSCRVSNPNSSGRKKLTDSPGLFSAQDTSLNRLHRKESLPSNERAVQTLAGSQPTSDKPSQRPSESTNCSPTRKRSSSESTSSTVNGVPSRSPRLVASGDDSVDSLLQRMVQNEDQEPMEKSIDAVIATASAPPSSSPGRSHSKDRTLGKPDSLLVPAVTSDSCNNSISLLSEKLTSSCSPHHIKRSVVEAMQRQARKMCNYDKILATKKNLDHVNKILKAKKLQRQARTGNNFVKRRPGRPRKCPLQAVVSMQAFQAAQFVNPELNRDEEGAALHLSPDTVTDVIEAVVQSVNLNPEHKKGLKRKGWLLEEQTRKKQKPLPEEEEQENNKSFNEAPVEIPSPSETPAKPSEPESTLQPVLSLIPREKKPPRPPKKKYQKAGLYSDVYKTTDPKSRLIQLKKEKLEYTPGEHEYGLFPAPIHVVFFVSGKYLRQKRIDFQLPYDILWQWKHNQLYKKPDVPLYKKIRSNVYVDVKPLSGYEATTCNCKKPDDDTRKGCVDDCLNRMIFAECSPNTCPCGEQCCNQRIQRHEWVQCLERFRAEEKGWGIRTKEPLKAGQFIIEYLGEVVSEQEFRNRMIEQYHNHSDHYCLNLDSGMVIDSYRMGNEARFINHSCDPNCEMQKWSVNGVYRIGLYALKDMPAGTELTYDYNFHSFNVEKQQLCKCGFEKCRGIIGGKSQRVNGLTSSKNSQPMATHKKSGRSKEKRKSKHKLKKRRGHLSEEPSENINTPTRLTPQLQMKPMSNRERNFVLKHHVFLVRNWEKIRQKQEEVKHTSDNIHSASLYTRWNGICRDDGNIKSDVFMTQFSALQTARSVRTRRLAAAEENIEVARAARLAQIFKEICDGIISYKDSSRQALAAPLLNLPPKKKNADYYEKISDPLDLITIEKQILTGYYKTVEAFDADMLKVFRNAEKYYGRKSPVGRDVCRLRKAYYNARHEASAQIDEIVGETASEADSSETSVSEKENGHEKDDDVIRCICGLYKDEGLMIQCDKCMVWQHCDCMGVNSDVEHYLCEQCDPRPVDREVPMIPRPHYAQPGCVYFICLLRDDLLLRQGDCVYLMRDSRRTPDGHPVRQSYRLLSHINRDKLDIFRIEKLWKNEKEERFAFGHHYFRPHETHHSPSRRFYHNELFRVPLYEIIPLEAVVGTCCVLDLYTYCKGRPKGVKEQDVYICDYRLDKSAHLFYKIHRNRYPVCTKPYAFDHFPKKLTPKKDFSPHYVPDNYKRNGGRSSWKSERSKPPLKDLGQEDDALPLIEEVLASQEQAANEIPSLEEPEREGATANVSEGEKKTEESSQEPQSTCTPEERRHNQRERLNQILLNLLEKIPGKNAIDVTYLLEEGSGRKLRRRTLFIPENSFRK</sequence>
<protein>
    <recommendedName>
        <fullName>Histone-lysine N-methyltransferase ASH1L</fullName>
        <ecNumber evidence="9">2.1.1.359</ecNumber>
        <ecNumber evidence="1">2.1.1.367</ecNumber>
    </recommendedName>
    <alternativeName>
        <fullName>ASH1-like protein</fullName>
        <shortName>huASH1</shortName>
    </alternativeName>
    <alternativeName>
        <fullName>Absent small and homeotic disks protein 1 homolog</fullName>
    </alternativeName>
    <alternativeName>
        <fullName>Lysine N-methyltransferase 2H</fullName>
    </alternativeName>
</protein>
<reference key="1">
    <citation type="journal article" date="2000" name="Proc. Natl. Acad. Sci. U.S.A.">
        <title>huASH1 protein, a putative transcription factor encoded by a human homologue of the Drosophila ash1 gene, localizes to both nuclei and cell-cell tight junctions.</title>
        <authorList>
            <person name="Nakamura T."/>
            <person name="Blechman J."/>
            <person name="Tada S."/>
            <person name="Rozovskaia T."/>
            <person name="Itoyama T."/>
            <person name="Bullrich F."/>
            <person name="Mazo A."/>
            <person name="Croce C.M."/>
            <person name="Geiger B."/>
            <person name="Canaani E."/>
        </authorList>
    </citation>
    <scope>NUCLEOTIDE SEQUENCE [MRNA] (ISOFORM 1)</scope>
    <scope>SUBCELLULAR LOCATION</scope>
    <scope>TISSUE SPECIFICITY</scope>
    <scope>VARIANT ALA-1771</scope>
</reference>
<reference key="2">
    <citation type="journal article" date="2006" name="Nature">
        <title>The DNA sequence and biological annotation of human chromosome 1.</title>
        <authorList>
            <person name="Gregory S.G."/>
            <person name="Barlow K.F."/>
            <person name="McLay K.E."/>
            <person name="Kaul R."/>
            <person name="Swarbreck D."/>
            <person name="Dunham A."/>
            <person name="Scott C.E."/>
            <person name="Howe K.L."/>
            <person name="Woodfine K."/>
            <person name="Spencer C.C.A."/>
            <person name="Jones M.C."/>
            <person name="Gillson C."/>
            <person name="Searle S."/>
            <person name="Zhou Y."/>
            <person name="Kokocinski F."/>
            <person name="McDonald L."/>
            <person name="Evans R."/>
            <person name="Phillips K."/>
            <person name="Atkinson A."/>
            <person name="Cooper R."/>
            <person name="Jones C."/>
            <person name="Hall R.E."/>
            <person name="Andrews T.D."/>
            <person name="Lloyd C."/>
            <person name="Ainscough R."/>
            <person name="Almeida J.P."/>
            <person name="Ambrose K.D."/>
            <person name="Anderson F."/>
            <person name="Andrew R.W."/>
            <person name="Ashwell R.I.S."/>
            <person name="Aubin K."/>
            <person name="Babbage A.K."/>
            <person name="Bagguley C.L."/>
            <person name="Bailey J."/>
            <person name="Beasley H."/>
            <person name="Bethel G."/>
            <person name="Bird C.P."/>
            <person name="Bray-Allen S."/>
            <person name="Brown J.Y."/>
            <person name="Brown A.J."/>
            <person name="Buckley D."/>
            <person name="Burton J."/>
            <person name="Bye J."/>
            <person name="Carder C."/>
            <person name="Chapman J.C."/>
            <person name="Clark S.Y."/>
            <person name="Clarke G."/>
            <person name="Clee C."/>
            <person name="Cobley V."/>
            <person name="Collier R.E."/>
            <person name="Corby N."/>
            <person name="Coville G.J."/>
            <person name="Davies J."/>
            <person name="Deadman R."/>
            <person name="Dunn M."/>
            <person name="Earthrowl M."/>
            <person name="Ellington A.G."/>
            <person name="Errington H."/>
            <person name="Frankish A."/>
            <person name="Frankland J."/>
            <person name="French L."/>
            <person name="Garner P."/>
            <person name="Garnett J."/>
            <person name="Gay L."/>
            <person name="Ghori M.R.J."/>
            <person name="Gibson R."/>
            <person name="Gilby L.M."/>
            <person name="Gillett W."/>
            <person name="Glithero R.J."/>
            <person name="Grafham D.V."/>
            <person name="Griffiths C."/>
            <person name="Griffiths-Jones S."/>
            <person name="Grocock R."/>
            <person name="Hammond S."/>
            <person name="Harrison E.S.I."/>
            <person name="Hart E."/>
            <person name="Haugen E."/>
            <person name="Heath P.D."/>
            <person name="Holmes S."/>
            <person name="Holt K."/>
            <person name="Howden P.J."/>
            <person name="Hunt A.R."/>
            <person name="Hunt S.E."/>
            <person name="Hunter G."/>
            <person name="Isherwood J."/>
            <person name="James R."/>
            <person name="Johnson C."/>
            <person name="Johnson D."/>
            <person name="Joy A."/>
            <person name="Kay M."/>
            <person name="Kershaw J.K."/>
            <person name="Kibukawa M."/>
            <person name="Kimberley A.M."/>
            <person name="King A."/>
            <person name="Knights A.J."/>
            <person name="Lad H."/>
            <person name="Laird G."/>
            <person name="Lawlor S."/>
            <person name="Leongamornlert D.A."/>
            <person name="Lloyd D.M."/>
            <person name="Loveland J."/>
            <person name="Lovell J."/>
            <person name="Lush M.J."/>
            <person name="Lyne R."/>
            <person name="Martin S."/>
            <person name="Mashreghi-Mohammadi M."/>
            <person name="Matthews L."/>
            <person name="Matthews N.S.W."/>
            <person name="McLaren S."/>
            <person name="Milne S."/>
            <person name="Mistry S."/>
            <person name="Moore M.J.F."/>
            <person name="Nickerson T."/>
            <person name="O'Dell C.N."/>
            <person name="Oliver K."/>
            <person name="Palmeiri A."/>
            <person name="Palmer S.A."/>
            <person name="Parker A."/>
            <person name="Patel D."/>
            <person name="Pearce A.V."/>
            <person name="Peck A.I."/>
            <person name="Pelan S."/>
            <person name="Phelps K."/>
            <person name="Phillimore B.J."/>
            <person name="Plumb R."/>
            <person name="Rajan J."/>
            <person name="Raymond C."/>
            <person name="Rouse G."/>
            <person name="Saenphimmachak C."/>
            <person name="Sehra H.K."/>
            <person name="Sheridan E."/>
            <person name="Shownkeen R."/>
            <person name="Sims S."/>
            <person name="Skuce C.D."/>
            <person name="Smith M."/>
            <person name="Steward C."/>
            <person name="Subramanian S."/>
            <person name="Sycamore N."/>
            <person name="Tracey A."/>
            <person name="Tromans A."/>
            <person name="Van Helmond Z."/>
            <person name="Wall M."/>
            <person name="Wallis J.M."/>
            <person name="White S."/>
            <person name="Whitehead S.L."/>
            <person name="Wilkinson J.E."/>
            <person name="Willey D.L."/>
            <person name="Williams H."/>
            <person name="Wilming L."/>
            <person name="Wray P.W."/>
            <person name="Wu Z."/>
            <person name="Coulson A."/>
            <person name="Vaudin M."/>
            <person name="Sulston J.E."/>
            <person name="Durbin R.M."/>
            <person name="Hubbard T."/>
            <person name="Wooster R."/>
            <person name="Dunham I."/>
            <person name="Carter N.P."/>
            <person name="McVean G."/>
            <person name="Ross M.T."/>
            <person name="Harrow J."/>
            <person name="Olson M.V."/>
            <person name="Beck S."/>
            <person name="Rogers J."/>
            <person name="Bentley D.R."/>
        </authorList>
    </citation>
    <scope>NUCLEOTIDE SEQUENCE [LARGE SCALE GENOMIC DNA]</scope>
</reference>
<reference key="3">
    <citation type="journal article" date="2000" name="DNA Res.">
        <title>Prediction of the coding sequences of unidentified human genes. XVI. The complete sequences of 150 new cDNA clones from brain which code for large proteins in vitro.</title>
        <authorList>
            <person name="Nagase T."/>
            <person name="Kikuno R."/>
            <person name="Ishikawa K."/>
            <person name="Hirosawa M."/>
            <person name="Ohara O."/>
        </authorList>
    </citation>
    <scope>NUCLEOTIDE SEQUENCE [LARGE SCALE MRNA] OF 1-1345</scope>
    <source>
        <tissue>Brain</tissue>
    </source>
</reference>
<reference key="4">
    <citation type="submission" date="2005-03" db="EMBL/GenBank/DDBJ databases">
        <authorList>
            <person name="Totoki Y."/>
            <person name="Toyoda A."/>
            <person name="Takeda T."/>
            <person name="Sakaki Y."/>
            <person name="Tanaka A."/>
            <person name="Yokoyama S."/>
            <person name="Ohara O."/>
            <person name="Nagase T."/>
            <person name="Kikuno R.F."/>
        </authorList>
    </citation>
    <scope>NUCLEOTIDE SEQUENCE [LARGE SCALE MRNA] OF 710-1345</scope>
    <source>
        <tissue>Brain</tissue>
    </source>
</reference>
<reference key="5">
    <citation type="journal article" date="2004" name="Nat. Genet.">
        <title>Complete sequencing and characterization of 21,243 full-length human cDNAs.</title>
        <authorList>
            <person name="Ota T."/>
            <person name="Suzuki Y."/>
            <person name="Nishikawa T."/>
            <person name="Otsuki T."/>
            <person name="Sugiyama T."/>
            <person name="Irie R."/>
            <person name="Wakamatsu A."/>
            <person name="Hayashi K."/>
            <person name="Sato H."/>
            <person name="Nagai K."/>
            <person name="Kimura K."/>
            <person name="Makita H."/>
            <person name="Sekine M."/>
            <person name="Obayashi M."/>
            <person name="Nishi T."/>
            <person name="Shibahara T."/>
            <person name="Tanaka T."/>
            <person name="Ishii S."/>
            <person name="Yamamoto J."/>
            <person name="Saito K."/>
            <person name="Kawai Y."/>
            <person name="Isono Y."/>
            <person name="Nakamura Y."/>
            <person name="Nagahari K."/>
            <person name="Murakami K."/>
            <person name="Yasuda T."/>
            <person name="Iwayanagi T."/>
            <person name="Wagatsuma M."/>
            <person name="Shiratori A."/>
            <person name="Sudo H."/>
            <person name="Hosoiri T."/>
            <person name="Kaku Y."/>
            <person name="Kodaira H."/>
            <person name="Kondo H."/>
            <person name="Sugawara M."/>
            <person name="Takahashi M."/>
            <person name="Kanda K."/>
            <person name="Yokoi T."/>
            <person name="Furuya T."/>
            <person name="Kikkawa E."/>
            <person name="Omura Y."/>
            <person name="Abe K."/>
            <person name="Kamihara K."/>
            <person name="Katsuta N."/>
            <person name="Sato K."/>
            <person name="Tanikawa M."/>
            <person name="Yamazaki M."/>
            <person name="Ninomiya K."/>
            <person name="Ishibashi T."/>
            <person name="Yamashita H."/>
            <person name="Murakawa K."/>
            <person name="Fujimori K."/>
            <person name="Tanai H."/>
            <person name="Kimata M."/>
            <person name="Watanabe M."/>
            <person name="Hiraoka S."/>
            <person name="Chiba Y."/>
            <person name="Ishida S."/>
            <person name="Ono Y."/>
            <person name="Takiguchi S."/>
            <person name="Watanabe S."/>
            <person name="Yosida M."/>
            <person name="Hotuta T."/>
            <person name="Kusano J."/>
            <person name="Kanehori K."/>
            <person name="Takahashi-Fujii A."/>
            <person name="Hara H."/>
            <person name="Tanase T.-O."/>
            <person name="Nomura Y."/>
            <person name="Togiya S."/>
            <person name="Komai F."/>
            <person name="Hara R."/>
            <person name="Takeuchi K."/>
            <person name="Arita M."/>
            <person name="Imose N."/>
            <person name="Musashino K."/>
            <person name="Yuuki H."/>
            <person name="Oshima A."/>
            <person name="Sasaki N."/>
            <person name="Aotsuka S."/>
            <person name="Yoshikawa Y."/>
            <person name="Matsunawa H."/>
            <person name="Ichihara T."/>
            <person name="Shiohata N."/>
            <person name="Sano S."/>
            <person name="Moriya S."/>
            <person name="Momiyama H."/>
            <person name="Satoh N."/>
            <person name="Takami S."/>
            <person name="Terashima Y."/>
            <person name="Suzuki O."/>
            <person name="Nakagawa S."/>
            <person name="Senoh A."/>
            <person name="Mizoguchi H."/>
            <person name="Goto Y."/>
            <person name="Shimizu F."/>
            <person name="Wakebe H."/>
            <person name="Hishigaki H."/>
            <person name="Watanabe T."/>
            <person name="Sugiyama A."/>
            <person name="Takemoto M."/>
            <person name="Kawakami B."/>
            <person name="Yamazaki M."/>
            <person name="Watanabe K."/>
            <person name="Kumagai A."/>
            <person name="Itakura S."/>
            <person name="Fukuzumi Y."/>
            <person name="Fujimori Y."/>
            <person name="Komiyama M."/>
            <person name="Tashiro H."/>
            <person name="Tanigami A."/>
            <person name="Fujiwara T."/>
            <person name="Ono T."/>
            <person name="Yamada K."/>
            <person name="Fujii Y."/>
            <person name="Ozaki K."/>
            <person name="Hirao M."/>
            <person name="Ohmori Y."/>
            <person name="Kawabata A."/>
            <person name="Hikiji T."/>
            <person name="Kobatake N."/>
            <person name="Inagaki H."/>
            <person name="Ikema Y."/>
            <person name="Okamoto S."/>
            <person name="Okitani R."/>
            <person name="Kawakami T."/>
            <person name="Noguchi S."/>
            <person name="Itoh T."/>
            <person name="Shigeta K."/>
            <person name="Senba T."/>
            <person name="Matsumura K."/>
            <person name="Nakajima Y."/>
            <person name="Mizuno T."/>
            <person name="Morinaga M."/>
            <person name="Sasaki M."/>
            <person name="Togashi T."/>
            <person name="Oyama M."/>
            <person name="Hata H."/>
            <person name="Watanabe M."/>
            <person name="Komatsu T."/>
            <person name="Mizushima-Sugano J."/>
            <person name="Satoh T."/>
            <person name="Shirai Y."/>
            <person name="Takahashi Y."/>
            <person name="Nakagawa K."/>
            <person name="Okumura K."/>
            <person name="Nagase T."/>
            <person name="Nomura N."/>
            <person name="Kikuchi H."/>
            <person name="Masuho Y."/>
            <person name="Yamashita R."/>
            <person name="Nakai K."/>
            <person name="Yada T."/>
            <person name="Nakamura Y."/>
            <person name="Ohara O."/>
            <person name="Isogai T."/>
            <person name="Sugano S."/>
        </authorList>
    </citation>
    <scope>NUCLEOTIDE SEQUENCE [LARGE SCALE MRNA] OF 2000-2183 (ISOFORM 2)</scope>
</reference>
<reference key="6">
    <citation type="journal article" date="2008" name="J. Proteome Res.">
        <title>Combining protein-based IMAC, peptide-based IMAC, and MudPIT for efficient phosphoproteomic analysis.</title>
        <authorList>
            <person name="Cantin G.T."/>
            <person name="Yi W."/>
            <person name="Lu B."/>
            <person name="Park S.K."/>
            <person name="Xu T."/>
            <person name="Lee J.-D."/>
            <person name="Yates J.R. III"/>
        </authorList>
    </citation>
    <scope>IDENTIFICATION BY MASS SPECTROMETRY [LARGE SCALE ANALYSIS]</scope>
    <source>
        <tissue>Cervix carcinoma</tissue>
    </source>
</reference>
<reference key="7">
    <citation type="journal article" date="2008" name="Proc. Natl. Acad. Sci. U.S.A.">
        <title>A quantitative atlas of mitotic phosphorylation.</title>
        <authorList>
            <person name="Dephoure N."/>
            <person name="Zhou C."/>
            <person name="Villen J."/>
            <person name="Beausoleil S.A."/>
            <person name="Bakalarski C.E."/>
            <person name="Elledge S.J."/>
            <person name="Gygi S.P."/>
        </authorList>
    </citation>
    <scope>PHOSPHORYLATION [LARGE SCALE ANALYSIS] AT SER-22</scope>
    <scope>IDENTIFICATION BY MASS SPECTROMETRY [LARGE SCALE ANALYSIS]</scope>
    <source>
        <tissue>Cervix carcinoma</tissue>
    </source>
</reference>
<reference key="8">
    <citation type="journal article" date="2009" name="Anal. Chem.">
        <title>Lys-N and trypsin cover complementary parts of the phosphoproteome in a refined SCX-based approach.</title>
        <authorList>
            <person name="Gauci S."/>
            <person name="Helbig A.O."/>
            <person name="Slijper M."/>
            <person name="Krijgsveld J."/>
            <person name="Heck A.J."/>
            <person name="Mohammed S."/>
        </authorList>
    </citation>
    <scope>ACETYLATION [LARGE SCALE ANALYSIS] AT LYS-375</scope>
    <scope>IDENTIFICATION BY MASS SPECTROMETRY [LARGE SCALE ANALYSIS]</scope>
</reference>
<reference key="9">
    <citation type="journal article" date="2012" name="Cell">
        <title>Prdm3 and Prdm16 are H3K9me1 methyltransferases required for mammalian heterochromatin integrity.</title>
        <authorList>
            <person name="Pinheiro I."/>
            <person name="Margueron R."/>
            <person name="Shukeir N."/>
            <person name="Eisold M."/>
            <person name="Fritzsch C."/>
            <person name="Richter F.M."/>
            <person name="Mittler G."/>
            <person name="Genoud C."/>
            <person name="Goyama S."/>
            <person name="Kurokawa M."/>
            <person name="Son J."/>
            <person name="Reinberg D."/>
            <person name="Lachner M."/>
            <person name="Jenuwein T."/>
        </authorList>
    </citation>
    <scope>IDENTIFICATION BY MASS SPECTROMETRY</scope>
</reference>
<reference key="10">
    <citation type="journal article" date="2013" name="J. Proteome Res.">
        <title>Toward a comprehensive characterization of a human cancer cell phosphoproteome.</title>
        <authorList>
            <person name="Zhou H."/>
            <person name="Di Palma S."/>
            <person name="Preisinger C."/>
            <person name="Peng M."/>
            <person name="Polat A.N."/>
            <person name="Heck A.J."/>
            <person name="Mohammed S."/>
        </authorList>
    </citation>
    <scope>IDENTIFICATION BY MASS SPECTROMETRY [LARGE SCALE ANALYSIS]</scope>
    <source>
        <tissue>Cervix carcinoma</tissue>
    </source>
</reference>
<reference key="11">
    <citation type="journal article" date="2015" name="Genes Dev.">
        <title>Screen identifies bromodomain protein ZMYND8 in chromatin recognition of transcription-associated DNA damage that promotes homologous recombination.</title>
        <authorList>
            <person name="Gong F."/>
            <person name="Chiu L.Y."/>
            <person name="Cox B."/>
            <person name="Aymard F."/>
            <person name="Clouaire T."/>
            <person name="Leung J.W."/>
            <person name="Cammarata M."/>
            <person name="Perez M."/>
            <person name="Agarwal P."/>
            <person name="Brodbelt J.S."/>
            <person name="Legube G."/>
            <person name="Miller K.M."/>
        </authorList>
    </citation>
    <scope>SUBCELLULAR LOCATION</scope>
</reference>
<reference key="12">
    <citation type="journal article" date="2016" name="J. Biol. Chem.">
        <title>Substrate specificity of the HEMK2 protein glutamine methyltransferase and identification of novel substrates.</title>
        <authorList>
            <person name="Kusevic D."/>
            <person name="Kudithipudi S."/>
            <person name="Jeltsch A."/>
        </authorList>
    </citation>
    <scope>METHYLATION AT GLN-1220</scope>
    <scope>MUTAGENESIS OF GLN-1220</scope>
</reference>
<reference key="13">
    <citation type="journal article" date="2017" name="Nat. Struct. Mol. Biol.">
        <title>Site-specific mapping of the human SUMO proteome reveals co-modification with phosphorylation.</title>
        <authorList>
            <person name="Hendriks I.A."/>
            <person name="Lyon D."/>
            <person name="Young C."/>
            <person name="Jensen L.J."/>
            <person name="Vertegaal A.C."/>
            <person name="Nielsen M.L."/>
        </authorList>
    </citation>
    <scope>SUMOYLATION [LARGE SCALE ANALYSIS] AT LYS-34 AND LYS-425</scope>
    <scope>IDENTIFICATION BY MASS SPECTROMETRY [LARGE SCALE ANALYSIS]</scope>
</reference>
<reference key="14">
    <citation type="journal article" date="2011" name="J. Biol. Chem.">
        <title>Crystal structure of the human histone methyltransferase ASH1L catalytic domain and its implications for the regulatory mechanism.</title>
        <authorList>
            <person name="An S."/>
            <person name="Yeo K.J."/>
            <person name="Jeon Y.H."/>
            <person name="Song J.J."/>
        </authorList>
    </citation>
    <scope>X-RAY CRYSTALLOGRAPHY (2.9 ANGSTROMS) OF 2074-2293 IN COMPLEX WITH S-ADENOSYL-L-METHIONINE</scope>
    <scope>FUNCTION</scope>
    <scope>CATALYTIC ACTIVITY</scope>
</reference>
<reference key="15">
    <citation type="journal article" date="2012" name="Cell">
        <title>Histone recognition and large-scale structural analysis of the human bromodomain family.</title>
        <authorList>
            <person name="Filippakopoulos P."/>
            <person name="Picaud S."/>
            <person name="Mangos M."/>
            <person name="Keates T."/>
            <person name="Lambert J.P."/>
            <person name="Barsyte-Lovejoy D."/>
            <person name="Felletar I."/>
            <person name="Volkmer R."/>
            <person name="Muller S."/>
            <person name="Pawson T."/>
            <person name="Gingras A.C."/>
            <person name="Arrowsmith C.H."/>
            <person name="Knapp S."/>
        </authorList>
    </citation>
    <scope>X-RAY CRYSTALLOGRAPHY (2.54 ANGSTROMS) OF 2438-2561</scope>
</reference>
<reference key="16">
    <citation type="journal article" date="2012" name="N. Engl. J. Med.">
        <title>Diagnostic exome sequencing in persons with severe intellectual disability.</title>
        <authorList>
            <person name="de Ligt J."/>
            <person name="Willemsen M.H."/>
            <person name="van Bon B.W."/>
            <person name="Kleefstra T."/>
            <person name="Yntema H.G."/>
            <person name="Kroes T."/>
            <person name="Vulto-van Silfhout A.T."/>
            <person name="Koolen D.A."/>
            <person name="de Vries P."/>
            <person name="Gilissen C."/>
            <person name="del Rosario M."/>
            <person name="Hoischen A."/>
            <person name="Scheffer H."/>
            <person name="de Vries B.B."/>
            <person name="Brunner H.G."/>
            <person name="Veltman J.A."/>
            <person name="Vissers L.E."/>
        </authorList>
    </citation>
    <scope>INVOLVEMENT IN MRD52</scope>
    <scope>VARIANTS MRD52 SER-724; ARG-972; HIS-1276; TRP-1775 AND GLY-2853</scope>
    <scope>VARIANT GLY-277</scope>
</reference>
<reference key="17">
    <citation type="journal article" date="2016" name="Nat. Commun.">
        <title>De novo genic mutations among a Chinese autism spectrum disorder cohort.</title>
        <authorList>
            <person name="Wang T."/>
            <person name="Guo H."/>
            <person name="Xiong B."/>
            <person name="Stessman H.A."/>
            <person name="Wu H."/>
            <person name="Coe B.P."/>
            <person name="Turner T.N."/>
            <person name="Liu Y."/>
            <person name="Zhao W."/>
            <person name="Hoekzema K."/>
            <person name="Vives L."/>
            <person name="Xia L."/>
            <person name="Tang M."/>
            <person name="Ou J."/>
            <person name="Chen B."/>
            <person name="Shen Y."/>
            <person name="Xun G."/>
            <person name="Long M."/>
            <person name="Lin J."/>
            <person name="Kronenberg Z.N."/>
            <person name="Peng Y."/>
            <person name="Bai T."/>
            <person name="Li H."/>
            <person name="Ke X."/>
            <person name="Hu Z."/>
            <person name="Zhao J."/>
            <person name="Zou X."/>
            <person name="Xia K."/>
            <person name="Eichler E.E."/>
        </authorList>
    </citation>
    <scope>VARIANT MRD52 ILE-2085</scope>
</reference>
<reference key="18">
    <citation type="journal article" date="2017" name="Am. J. Med. Genet. A">
        <title>Novel MCA/ID syndrome with ASH1L mutation.</title>
        <authorList>
            <person name="Okamoto N."/>
            <person name="Miya F."/>
            <person name="Tsunoda T."/>
            <person name="Kato M."/>
            <person name="Saitoh S."/>
            <person name="Yamasaki M."/>
            <person name="Kanemura Y."/>
            <person name="Kosaki K."/>
        </authorList>
    </citation>
    <scope>VARIANT MRD52 PRO-2791</scope>
</reference>
<reference key="19">
    <citation type="journal article" date="2017" name="Nat. Genet.">
        <title>Targeted sequencing identifies 91 neurodevelopmental-disorder risk genes with autism and developmental-disability biases.</title>
        <authorList>
            <person name="Stessman H.A."/>
            <person name="Xiong B."/>
            <person name="Coe B.P."/>
            <person name="Wang T."/>
            <person name="Hoekzema K."/>
            <person name="Fenckova M."/>
            <person name="Kvarnung M."/>
            <person name="Gerdts J."/>
            <person name="Trinh S."/>
            <person name="Cosemans N."/>
            <person name="Vives L."/>
            <person name="Lin J."/>
            <person name="Turner T.N."/>
            <person name="Santen G."/>
            <person name="Ruivenkamp C."/>
            <person name="Kriek M."/>
            <person name="van Haeringen A."/>
            <person name="Aten E."/>
            <person name="Friend K."/>
            <person name="Liebelt J."/>
            <person name="Barnett C."/>
            <person name="Haan E."/>
            <person name="Shaw M."/>
            <person name="Gecz J."/>
            <person name="Anderlid B.M."/>
            <person name="Nordgren A."/>
            <person name="Lindstrand A."/>
            <person name="Schwartz C."/>
            <person name="Kooy R.F."/>
            <person name="Vandeweyer G."/>
            <person name="Helsmoortel C."/>
            <person name="Romano C."/>
            <person name="Alberti A."/>
            <person name="Vinci M."/>
            <person name="Avola E."/>
            <person name="Giusto S."/>
            <person name="Courchesne E."/>
            <person name="Pramparo T."/>
            <person name="Pierce K."/>
            <person name="Nalabolu S."/>
            <person name="Amaral D.G."/>
            <person name="Scheffer I.E."/>
            <person name="Delatycki M.B."/>
            <person name="Lockhart P.J."/>
            <person name="Hormozdiari F."/>
            <person name="Harich B."/>
            <person name="Castells-Nobau A."/>
            <person name="Xia K."/>
            <person name="Peeters H."/>
            <person name="Nordenskjoeld M."/>
            <person name="Schenck A."/>
            <person name="Bernier R.A."/>
            <person name="Eichler E.E."/>
        </authorList>
    </citation>
    <scope>VARIANTS MRD52 2148-GLU--LYS-2969 DEL AND HIS-2396</scope>
</reference>
<evidence type="ECO:0000250" key="1">
    <source>
        <dbReference type="UniProtKB" id="Q99MY8"/>
    </source>
</evidence>
<evidence type="ECO:0000255" key="2">
    <source>
        <dbReference type="PROSITE-ProRule" id="PRU00035"/>
    </source>
</evidence>
<evidence type="ECO:0000255" key="3">
    <source>
        <dbReference type="PROSITE-ProRule" id="PRU00155"/>
    </source>
</evidence>
<evidence type="ECO:0000255" key="4">
    <source>
        <dbReference type="PROSITE-ProRule" id="PRU00190"/>
    </source>
</evidence>
<evidence type="ECO:0000255" key="5">
    <source>
        <dbReference type="PROSITE-ProRule" id="PRU00370"/>
    </source>
</evidence>
<evidence type="ECO:0000255" key="6">
    <source>
        <dbReference type="PROSITE-ProRule" id="PRU00562"/>
    </source>
</evidence>
<evidence type="ECO:0000256" key="7">
    <source>
        <dbReference type="SAM" id="MobiDB-lite"/>
    </source>
</evidence>
<evidence type="ECO:0000269" key="8">
    <source>
    </source>
</evidence>
<evidence type="ECO:0000269" key="9">
    <source>
    </source>
</evidence>
<evidence type="ECO:0000269" key="10">
    <source>
    </source>
</evidence>
<evidence type="ECO:0000269" key="11">
    <source>
    </source>
</evidence>
<evidence type="ECO:0000269" key="12">
    <source>
    </source>
</evidence>
<evidence type="ECO:0000269" key="13">
    <source>
    </source>
</evidence>
<evidence type="ECO:0000269" key="14">
    <source>
    </source>
</evidence>
<evidence type="ECO:0000269" key="15">
    <source>
    </source>
</evidence>
<evidence type="ECO:0000303" key="16">
    <source>
    </source>
</evidence>
<evidence type="ECO:0000305" key="17"/>
<evidence type="ECO:0000305" key="18">
    <source>
    </source>
</evidence>
<evidence type="ECO:0007744" key="19">
    <source>
    </source>
</evidence>
<evidence type="ECO:0007744" key="20">
    <source>
    </source>
</evidence>
<evidence type="ECO:0007744" key="21">
    <source>
    </source>
</evidence>
<evidence type="ECO:0007829" key="22">
    <source>
        <dbReference type="PDB" id="3MQM"/>
    </source>
</evidence>
<evidence type="ECO:0007829" key="23">
    <source>
        <dbReference type="PDB" id="3OPE"/>
    </source>
</evidence>
<evidence type="ECO:0007829" key="24">
    <source>
        <dbReference type="PDB" id="4YNM"/>
    </source>
</evidence>
<evidence type="ECO:0007829" key="25">
    <source>
        <dbReference type="PDB" id="6AGO"/>
    </source>
</evidence>
<evidence type="ECO:0007829" key="26">
    <source>
        <dbReference type="PDB" id="6INE"/>
    </source>
</evidence>
<evidence type="ECO:0007829" key="27">
    <source>
        <dbReference type="PDB" id="6WZW"/>
    </source>
</evidence>
<dbReference type="EC" id="2.1.1.359" evidence="9"/>
<dbReference type="EC" id="2.1.1.367" evidence="1"/>
<dbReference type="EMBL" id="AF257305">
    <property type="protein sequence ID" value="AAF68983.1"/>
    <property type="molecule type" value="mRNA"/>
</dbReference>
<dbReference type="EMBL" id="AL139410">
    <property type="status" value="NOT_ANNOTATED_CDS"/>
    <property type="molecule type" value="Genomic_DNA"/>
</dbReference>
<dbReference type="EMBL" id="AL353807">
    <property type="status" value="NOT_ANNOTATED_CDS"/>
    <property type="molecule type" value="Genomic_DNA"/>
</dbReference>
<dbReference type="EMBL" id="AB037841">
    <property type="protein sequence ID" value="BAA92658.1"/>
    <property type="status" value="ALT_INIT"/>
    <property type="molecule type" value="mRNA"/>
</dbReference>
<dbReference type="EMBL" id="AB209068">
    <property type="protein sequence ID" value="BAD92305.1"/>
    <property type="molecule type" value="mRNA"/>
</dbReference>
<dbReference type="EMBL" id="DB282357">
    <property type="status" value="NOT_ANNOTATED_CDS"/>
    <property type="molecule type" value="mRNA"/>
</dbReference>
<dbReference type="CCDS" id="CCDS1113.2">
    <molecule id="Q9NR48-2"/>
</dbReference>
<dbReference type="CCDS" id="CCDS91067.1">
    <molecule id="Q9NR48-1"/>
</dbReference>
<dbReference type="RefSeq" id="NP_001353106.1">
    <molecule id="Q9NR48-1"/>
    <property type="nucleotide sequence ID" value="NM_001366177.2"/>
</dbReference>
<dbReference type="RefSeq" id="NP_060959.2">
    <molecule id="Q9NR48-2"/>
    <property type="nucleotide sequence ID" value="NM_018489.3"/>
</dbReference>
<dbReference type="RefSeq" id="XP_006711513.1">
    <molecule id="Q9NR48-2"/>
    <property type="nucleotide sequence ID" value="XM_006711450.4"/>
</dbReference>
<dbReference type="RefSeq" id="XP_006711514.1">
    <molecule id="Q9NR48-2"/>
    <property type="nucleotide sequence ID" value="XM_006711451.4"/>
</dbReference>
<dbReference type="RefSeq" id="XP_016857273.1">
    <property type="nucleotide sequence ID" value="XM_017001784.1"/>
</dbReference>
<dbReference type="RefSeq" id="XP_016857274.1">
    <molecule id="Q9NR48-2"/>
    <property type="nucleotide sequence ID" value="XM_017001785.2"/>
</dbReference>
<dbReference type="RefSeq" id="XP_047281186.1">
    <molecule id="Q9NR48-2"/>
    <property type="nucleotide sequence ID" value="XM_047425230.1"/>
</dbReference>
<dbReference type="RefSeq" id="XP_047281191.1">
    <molecule id="Q9NR48-2"/>
    <property type="nucleotide sequence ID" value="XM_047425235.1"/>
</dbReference>
<dbReference type="RefSeq" id="XP_047281197.1">
    <molecule id="Q9NR48-2"/>
    <property type="nucleotide sequence ID" value="XM_047425241.1"/>
</dbReference>
<dbReference type="PDB" id="3MQM">
    <property type="method" value="X-ray"/>
    <property type="resolution" value="2.54 A"/>
    <property type="chains" value="A/B=2438-2561"/>
</dbReference>
<dbReference type="PDB" id="3OPE">
    <property type="method" value="X-ray"/>
    <property type="resolution" value="2.90 A"/>
    <property type="chains" value="A/B=2074-2293"/>
</dbReference>
<dbReference type="PDB" id="4YNM">
    <property type="method" value="X-ray"/>
    <property type="resolution" value="2.19 A"/>
    <property type="chains" value="A/B=2074-2293"/>
</dbReference>
<dbReference type="PDB" id="4YNP">
    <property type="method" value="X-ray"/>
    <property type="resolution" value="2.90 A"/>
    <property type="chains" value="A/B=2074-2293"/>
</dbReference>
<dbReference type="PDB" id="4YPA">
    <property type="method" value="X-ray"/>
    <property type="resolution" value="2.30 A"/>
    <property type="chains" value="A/B/C/D=2074-2293"/>
</dbReference>
<dbReference type="PDB" id="4YPE">
    <property type="method" value="X-ray"/>
    <property type="resolution" value="2.20 A"/>
    <property type="chains" value="A/B=2074-2293"/>
</dbReference>
<dbReference type="PDB" id="4YPU">
    <property type="method" value="X-ray"/>
    <property type="resolution" value="2.60 A"/>
    <property type="chains" value="A/B=2074-2293"/>
</dbReference>
<dbReference type="PDB" id="6AGO">
    <property type="method" value="X-ray"/>
    <property type="resolution" value="3.10 A"/>
    <property type="chains" value="A/B=2039-2293"/>
</dbReference>
<dbReference type="PDB" id="6INE">
    <property type="method" value="X-ray"/>
    <property type="resolution" value="2.60 A"/>
    <property type="chains" value="A=2026-2293"/>
</dbReference>
<dbReference type="PDB" id="6WZW">
    <property type="method" value="X-ray"/>
    <property type="resolution" value="1.69 A"/>
    <property type="chains" value="A=2074-2293"/>
</dbReference>
<dbReference type="PDB" id="6X0P">
    <property type="method" value="X-ray"/>
    <property type="resolution" value="1.69 A"/>
    <property type="chains" value="A/B/C/D=2074-2293"/>
</dbReference>
<dbReference type="PDB" id="7Y0I">
    <property type="method" value="NMR"/>
    <property type="chains" value="A=2584-2635"/>
</dbReference>
<dbReference type="PDBsum" id="3MQM"/>
<dbReference type="PDBsum" id="3OPE"/>
<dbReference type="PDBsum" id="4YNM"/>
<dbReference type="PDBsum" id="4YNP"/>
<dbReference type="PDBsum" id="4YPA"/>
<dbReference type="PDBsum" id="4YPE"/>
<dbReference type="PDBsum" id="4YPU"/>
<dbReference type="PDBsum" id="6AGO"/>
<dbReference type="PDBsum" id="6INE"/>
<dbReference type="PDBsum" id="6WZW"/>
<dbReference type="PDBsum" id="6X0P"/>
<dbReference type="PDBsum" id="7Y0I"/>
<dbReference type="SMR" id="Q9NR48"/>
<dbReference type="BioGRID" id="120969">
    <property type="interactions" value="60"/>
</dbReference>
<dbReference type="FunCoup" id="Q9NR48">
    <property type="interactions" value="3750"/>
</dbReference>
<dbReference type="IntAct" id="Q9NR48">
    <property type="interactions" value="42"/>
</dbReference>
<dbReference type="MINT" id="Q9NR48"/>
<dbReference type="STRING" id="9606.ENSP00000376204"/>
<dbReference type="BindingDB" id="Q9NR48"/>
<dbReference type="ChEMBL" id="CHEMBL3588739"/>
<dbReference type="CarbonylDB" id="Q9NR48"/>
<dbReference type="GlyGen" id="Q9NR48">
    <property type="glycosylation" value="5 sites, 2 N-linked glycans (2 sites), 1 O-linked glycan (1 site)"/>
</dbReference>
<dbReference type="iPTMnet" id="Q9NR48"/>
<dbReference type="PhosphoSitePlus" id="Q9NR48"/>
<dbReference type="BioMuta" id="ASH1L"/>
<dbReference type="DMDM" id="117949323"/>
<dbReference type="jPOST" id="Q9NR48"/>
<dbReference type="MassIVE" id="Q9NR48"/>
<dbReference type="PaxDb" id="9606-ENSP00000376204"/>
<dbReference type="PeptideAtlas" id="Q9NR48"/>
<dbReference type="ProteomicsDB" id="82273">
    <molecule id="Q9NR48-1"/>
</dbReference>
<dbReference type="ProteomicsDB" id="82274">
    <molecule id="Q9NR48-2"/>
</dbReference>
<dbReference type="Pumba" id="Q9NR48"/>
<dbReference type="Antibodypedia" id="1436">
    <property type="antibodies" value="175 antibodies from 18 providers"/>
</dbReference>
<dbReference type="DNASU" id="55870"/>
<dbReference type="Ensembl" id="ENST00000368346.7">
    <molecule id="Q9NR48-1"/>
    <property type="protein sequence ID" value="ENSP00000357330.3"/>
    <property type="gene ID" value="ENSG00000116539.14"/>
</dbReference>
<dbReference type="Ensembl" id="ENST00000392403.8">
    <molecule id="Q9NR48-2"/>
    <property type="protein sequence ID" value="ENSP00000376204.3"/>
    <property type="gene ID" value="ENSG00000116539.14"/>
</dbReference>
<dbReference type="Ensembl" id="ENST00000677213.1">
    <molecule id="Q9NR48-2"/>
    <property type="protein sequence ID" value="ENSP00000503315.1"/>
    <property type="gene ID" value="ENSG00000116539.14"/>
</dbReference>
<dbReference type="Ensembl" id="ENST00000678117.1">
    <molecule id="Q9NR48-2"/>
    <property type="protein sequence ID" value="ENSP00000504629.1"/>
    <property type="gene ID" value="ENSG00000116539.14"/>
</dbReference>
<dbReference type="Ensembl" id="ENST00000679097.1">
    <molecule id="Q9NR48-2"/>
    <property type="protein sequence ID" value="ENSP00000503265.1"/>
    <property type="gene ID" value="ENSG00000116539.14"/>
</dbReference>
<dbReference type="GeneID" id="55870"/>
<dbReference type="KEGG" id="hsa:55870"/>
<dbReference type="MANE-Select" id="ENST00000392403.8">
    <molecule id="Q9NR48-2"/>
    <property type="protein sequence ID" value="ENSP00000376204.3"/>
    <property type="RefSeq nucleotide sequence ID" value="NM_018489.3"/>
    <property type="RefSeq protein sequence ID" value="NP_060959.2"/>
</dbReference>
<dbReference type="UCSC" id="uc001fkt.4">
    <molecule id="Q9NR48-1"/>
    <property type="organism name" value="human"/>
</dbReference>
<dbReference type="AGR" id="HGNC:19088"/>
<dbReference type="CTD" id="55870"/>
<dbReference type="DisGeNET" id="55870"/>
<dbReference type="GeneCards" id="ASH1L"/>
<dbReference type="HGNC" id="HGNC:19088">
    <property type="gene designation" value="ASH1L"/>
</dbReference>
<dbReference type="HPA" id="ENSG00000116539">
    <property type="expression patterns" value="Low tissue specificity"/>
</dbReference>
<dbReference type="MalaCards" id="ASH1L"/>
<dbReference type="MIM" id="607999">
    <property type="type" value="gene"/>
</dbReference>
<dbReference type="MIM" id="617796">
    <property type="type" value="phenotype"/>
</dbReference>
<dbReference type="neXtProt" id="NX_Q9NR48"/>
<dbReference type="OpenTargets" id="ENSG00000116539"/>
<dbReference type="Orphanet" id="178469">
    <property type="disease" value="Autosomal dominant non-syndromic intellectual disability"/>
</dbReference>
<dbReference type="PharmGKB" id="PA134891064"/>
<dbReference type="VEuPathDB" id="HostDB:ENSG00000116539"/>
<dbReference type="eggNOG" id="KOG1083">
    <property type="taxonomic scope" value="Eukaryota"/>
</dbReference>
<dbReference type="GeneTree" id="ENSGT00940000156698"/>
<dbReference type="HOGENOM" id="CLU_000657_0_0_1"/>
<dbReference type="InParanoid" id="Q9NR48"/>
<dbReference type="OMA" id="VEAMQCQ"/>
<dbReference type="OrthoDB" id="79252at2759"/>
<dbReference type="PAN-GO" id="Q9NR48">
    <property type="GO annotations" value="5 GO annotations based on evolutionary models"/>
</dbReference>
<dbReference type="PhylomeDB" id="Q9NR48"/>
<dbReference type="TreeFam" id="TF106416"/>
<dbReference type="BioCyc" id="MetaCyc:HS04019-MONOMER"/>
<dbReference type="BRENDA" id="2.1.1.357">
    <property type="organism ID" value="2681"/>
</dbReference>
<dbReference type="PathwayCommons" id="Q9NR48"/>
<dbReference type="Reactome" id="R-HSA-3214841">
    <property type="pathway name" value="PKMTs methylate histone lysines"/>
</dbReference>
<dbReference type="SignaLink" id="Q9NR48"/>
<dbReference type="SIGNOR" id="Q9NR48"/>
<dbReference type="BioGRID-ORCS" id="55870">
    <property type="hits" value="44 hits in 1182 CRISPR screens"/>
</dbReference>
<dbReference type="ChiTaRS" id="ASH1L">
    <property type="organism name" value="human"/>
</dbReference>
<dbReference type="EvolutionaryTrace" id="Q9NR48"/>
<dbReference type="GeneWiki" id="ASH1L"/>
<dbReference type="GenomeRNAi" id="55870"/>
<dbReference type="Pharos" id="Q9NR48">
    <property type="development level" value="Tbio"/>
</dbReference>
<dbReference type="PRO" id="PR:Q9NR48"/>
<dbReference type="Proteomes" id="UP000005640">
    <property type="component" value="Chromosome 1"/>
</dbReference>
<dbReference type="RNAct" id="Q9NR48">
    <property type="molecule type" value="protein"/>
</dbReference>
<dbReference type="Bgee" id="ENSG00000116539">
    <property type="expression patterns" value="Expressed in Brodmann (1909) area 23 and 188 other cell types or tissues"/>
</dbReference>
<dbReference type="ExpressionAtlas" id="Q9NR48">
    <property type="expression patterns" value="baseline and differential"/>
</dbReference>
<dbReference type="GO" id="GO:0005923">
    <property type="term" value="C:bicellular tight junction"/>
    <property type="evidence" value="ECO:0000304"/>
    <property type="project" value="ProtInc"/>
</dbReference>
<dbReference type="GO" id="GO:0005694">
    <property type="term" value="C:chromosome"/>
    <property type="evidence" value="ECO:0007669"/>
    <property type="project" value="UniProtKB-SubCell"/>
</dbReference>
<dbReference type="GO" id="GO:0005794">
    <property type="term" value="C:Golgi apparatus"/>
    <property type="evidence" value="ECO:0000314"/>
    <property type="project" value="HPA"/>
</dbReference>
<dbReference type="GO" id="GO:0005654">
    <property type="term" value="C:nucleoplasm"/>
    <property type="evidence" value="ECO:0000314"/>
    <property type="project" value="HPA"/>
</dbReference>
<dbReference type="GO" id="GO:0005634">
    <property type="term" value="C:nucleus"/>
    <property type="evidence" value="ECO:0000314"/>
    <property type="project" value="UniProtKB"/>
</dbReference>
<dbReference type="GO" id="GO:0003682">
    <property type="term" value="F:chromatin binding"/>
    <property type="evidence" value="ECO:0007669"/>
    <property type="project" value="InterPro"/>
</dbReference>
<dbReference type="GO" id="GO:0003677">
    <property type="term" value="F:DNA binding"/>
    <property type="evidence" value="ECO:0007669"/>
    <property type="project" value="InterPro"/>
</dbReference>
<dbReference type="GO" id="GO:0140938">
    <property type="term" value="F:histone H3 methyltransferase activity"/>
    <property type="evidence" value="ECO:0000304"/>
    <property type="project" value="Reactome"/>
</dbReference>
<dbReference type="GO" id="GO:0046975">
    <property type="term" value="F:histone H3K36 methyltransferase activity"/>
    <property type="evidence" value="ECO:0000314"/>
    <property type="project" value="HGNC"/>
</dbReference>
<dbReference type="GO" id="GO:0140955">
    <property type="term" value="F:histone H3K36 trimethyltransferase activity"/>
    <property type="evidence" value="ECO:0007669"/>
    <property type="project" value="UniProtKB-EC"/>
</dbReference>
<dbReference type="GO" id="GO:0042800">
    <property type="term" value="F:histone H3K4 methyltransferase activity"/>
    <property type="evidence" value="ECO:0000318"/>
    <property type="project" value="GO_Central"/>
</dbReference>
<dbReference type="GO" id="GO:0046974">
    <property type="term" value="F:histone H3K9 methyltransferase activity"/>
    <property type="evidence" value="ECO:0000250"/>
    <property type="project" value="UniProtKB"/>
</dbReference>
<dbReference type="GO" id="GO:0140948">
    <property type="term" value="F:histone H3K9 monomethyltransferase activity"/>
    <property type="evidence" value="ECO:0007669"/>
    <property type="project" value="UniProtKB-EC"/>
</dbReference>
<dbReference type="GO" id="GO:0140947">
    <property type="term" value="F:histone H3K9me2 methyltransferase activity"/>
    <property type="evidence" value="ECO:0007669"/>
    <property type="project" value="RHEA"/>
</dbReference>
<dbReference type="GO" id="GO:0008270">
    <property type="term" value="F:zinc ion binding"/>
    <property type="evidence" value="ECO:0007669"/>
    <property type="project" value="UniProtKB-KW"/>
</dbReference>
<dbReference type="GO" id="GO:0046697">
    <property type="term" value="P:decidualization"/>
    <property type="evidence" value="ECO:0007669"/>
    <property type="project" value="Ensembl"/>
</dbReference>
<dbReference type="GO" id="GO:0030317">
    <property type="term" value="P:flagellated sperm motility"/>
    <property type="evidence" value="ECO:0007669"/>
    <property type="project" value="Ensembl"/>
</dbReference>
<dbReference type="GO" id="GO:0006954">
    <property type="term" value="P:inflammatory response"/>
    <property type="evidence" value="ECO:0007669"/>
    <property type="project" value="Ensembl"/>
</dbReference>
<dbReference type="GO" id="GO:0000165">
    <property type="term" value="P:MAPK cascade"/>
    <property type="evidence" value="ECO:0007669"/>
    <property type="project" value="Ensembl"/>
</dbReference>
<dbReference type="GO" id="GO:0032259">
    <property type="term" value="P:methylation"/>
    <property type="evidence" value="ECO:0007669"/>
    <property type="project" value="UniProtKB-KW"/>
</dbReference>
<dbReference type="GO" id="GO:0002674">
    <property type="term" value="P:negative regulation of acute inflammatory response"/>
    <property type="evidence" value="ECO:0007669"/>
    <property type="project" value="Ensembl"/>
</dbReference>
<dbReference type="GO" id="GO:0043409">
    <property type="term" value="P:negative regulation of MAPK cascade"/>
    <property type="evidence" value="ECO:0007669"/>
    <property type="project" value="Ensembl"/>
</dbReference>
<dbReference type="GO" id="GO:0045944">
    <property type="term" value="P:positive regulation of transcription by RNA polymerase II"/>
    <property type="evidence" value="ECO:0007669"/>
    <property type="project" value="Ensembl"/>
</dbReference>
<dbReference type="GO" id="GO:0009791">
    <property type="term" value="P:post-embryonic development"/>
    <property type="evidence" value="ECO:0007669"/>
    <property type="project" value="Ensembl"/>
</dbReference>
<dbReference type="GO" id="GO:0006355">
    <property type="term" value="P:regulation of DNA-templated transcription"/>
    <property type="evidence" value="ECO:0000318"/>
    <property type="project" value="GO_Central"/>
</dbReference>
<dbReference type="GO" id="GO:0007338">
    <property type="term" value="P:single fertilization"/>
    <property type="evidence" value="ECO:0007669"/>
    <property type="project" value="Ensembl"/>
</dbReference>
<dbReference type="GO" id="GO:0001501">
    <property type="term" value="P:skeletal system development"/>
    <property type="evidence" value="ECO:0007669"/>
    <property type="project" value="Ensembl"/>
</dbReference>
<dbReference type="GO" id="GO:1903699">
    <property type="term" value="P:tarsal gland development"/>
    <property type="evidence" value="ECO:0007669"/>
    <property type="project" value="Ensembl"/>
</dbReference>
<dbReference type="GO" id="GO:0006366">
    <property type="term" value="P:transcription by RNA polymerase II"/>
    <property type="evidence" value="ECO:0007669"/>
    <property type="project" value="Ensembl"/>
</dbReference>
<dbReference type="GO" id="GO:1903709">
    <property type="term" value="P:uterine gland development"/>
    <property type="evidence" value="ECO:0007669"/>
    <property type="project" value="Ensembl"/>
</dbReference>
<dbReference type="GO" id="GO:0061038">
    <property type="term" value="P:uterus morphogenesis"/>
    <property type="evidence" value="ECO:0007669"/>
    <property type="project" value="Ensembl"/>
</dbReference>
<dbReference type="CDD" id="cd04717">
    <property type="entry name" value="BAH_polybromo"/>
    <property type="match status" value="1"/>
</dbReference>
<dbReference type="CDD" id="cd05525">
    <property type="entry name" value="Bromo_ASH1"/>
    <property type="match status" value="1"/>
</dbReference>
<dbReference type="CDD" id="cd15548">
    <property type="entry name" value="PHD_ASH1L"/>
    <property type="match status" value="1"/>
</dbReference>
<dbReference type="CDD" id="cd19174">
    <property type="entry name" value="SET_ASH1L"/>
    <property type="match status" value="1"/>
</dbReference>
<dbReference type="FunFam" id="1.20.920.10:FF:000025">
    <property type="entry name" value="Histone-lysine N-methyltransferase"/>
    <property type="match status" value="1"/>
</dbReference>
<dbReference type="FunFam" id="2.170.270.10:FF:000011">
    <property type="entry name" value="Histone-lysine N-methyltransferase"/>
    <property type="match status" value="1"/>
</dbReference>
<dbReference type="FunFam" id="2.30.30.490:FF:000008">
    <property type="entry name" value="Histone-lysine N-methyltransferase"/>
    <property type="match status" value="1"/>
</dbReference>
<dbReference type="FunFam" id="3.30.40.10:FF:000113">
    <property type="entry name" value="Histone-lysine N-methyltransferase"/>
    <property type="match status" value="1"/>
</dbReference>
<dbReference type="Gene3D" id="2.30.30.490">
    <property type="match status" value="1"/>
</dbReference>
<dbReference type="Gene3D" id="1.20.920.10">
    <property type="entry name" value="Bromodomain-like"/>
    <property type="match status" value="1"/>
</dbReference>
<dbReference type="Gene3D" id="2.170.270.10">
    <property type="entry name" value="SET domain"/>
    <property type="match status" value="1"/>
</dbReference>
<dbReference type="Gene3D" id="3.30.40.10">
    <property type="entry name" value="Zinc/RING finger domain, C3HC4 (zinc finger)"/>
    <property type="match status" value="1"/>
</dbReference>
<dbReference type="InterPro" id="IPR017956">
    <property type="entry name" value="AT_hook_DNA-bd_motif"/>
</dbReference>
<dbReference type="InterPro" id="IPR006560">
    <property type="entry name" value="AWS_dom"/>
</dbReference>
<dbReference type="InterPro" id="IPR001025">
    <property type="entry name" value="BAH_dom"/>
</dbReference>
<dbReference type="InterPro" id="IPR043151">
    <property type="entry name" value="BAH_sf"/>
</dbReference>
<dbReference type="InterPro" id="IPR043320">
    <property type="entry name" value="Bromo_ASH1L"/>
</dbReference>
<dbReference type="InterPro" id="IPR001487">
    <property type="entry name" value="Bromodomain"/>
</dbReference>
<dbReference type="InterPro" id="IPR036427">
    <property type="entry name" value="Bromodomain-like_sf"/>
</dbReference>
<dbReference type="InterPro" id="IPR043319">
    <property type="entry name" value="PHD_ASH1L"/>
</dbReference>
<dbReference type="InterPro" id="IPR003616">
    <property type="entry name" value="Post-SET_dom"/>
</dbReference>
<dbReference type="InterPro" id="IPR001214">
    <property type="entry name" value="SET_dom"/>
</dbReference>
<dbReference type="InterPro" id="IPR046341">
    <property type="entry name" value="SET_dom_sf"/>
</dbReference>
<dbReference type="InterPro" id="IPR019786">
    <property type="entry name" value="Zinc_finger_PHD-type_CS"/>
</dbReference>
<dbReference type="InterPro" id="IPR011011">
    <property type="entry name" value="Znf_FYVE_PHD"/>
</dbReference>
<dbReference type="InterPro" id="IPR001965">
    <property type="entry name" value="Znf_PHD"/>
</dbReference>
<dbReference type="InterPro" id="IPR013083">
    <property type="entry name" value="Znf_RING/FYVE/PHD"/>
</dbReference>
<dbReference type="PANTHER" id="PTHR46147">
    <property type="entry name" value="HISTONE-LYSINE N-METHYLTRANSFERASE ASH1"/>
    <property type="match status" value="1"/>
</dbReference>
<dbReference type="PANTHER" id="PTHR46147:SF2">
    <property type="entry name" value="SET-BINDING PROTEIN"/>
    <property type="match status" value="1"/>
</dbReference>
<dbReference type="Pfam" id="PF17907">
    <property type="entry name" value="AWS"/>
    <property type="match status" value="1"/>
</dbReference>
<dbReference type="Pfam" id="PF01426">
    <property type="entry name" value="BAH"/>
    <property type="match status" value="1"/>
</dbReference>
<dbReference type="Pfam" id="PF00439">
    <property type="entry name" value="Bromodomain"/>
    <property type="match status" value="1"/>
</dbReference>
<dbReference type="Pfam" id="PF20826">
    <property type="entry name" value="PHD_5"/>
    <property type="match status" value="1"/>
</dbReference>
<dbReference type="Pfam" id="PF00856">
    <property type="entry name" value="SET"/>
    <property type="match status" value="1"/>
</dbReference>
<dbReference type="SMART" id="SM00384">
    <property type="entry name" value="AT_hook"/>
    <property type="match status" value="4"/>
</dbReference>
<dbReference type="SMART" id="SM00570">
    <property type="entry name" value="AWS"/>
    <property type="match status" value="1"/>
</dbReference>
<dbReference type="SMART" id="SM00439">
    <property type="entry name" value="BAH"/>
    <property type="match status" value="1"/>
</dbReference>
<dbReference type="SMART" id="SM00297">
    <property type="entry name" value="BROMO"/>
    <property type="match status" value="1"/>
</dbReference>
<dbReference type="SMART" id="SM00249">
    <property type="entry name" value="PHD"/>
    <property type="match status" value="1"/>
</dbReference>
<dbReference type="SMART" id="SM00317">
    <property type="entry name" value="SET"/>
    <property type="match status" value="1"/>
</dbReference>
<dbReference type="SUPFAM" id="SSF47370">
    <property type="entry name" value="Bromodomain"/>
    <property type="match status" value="1"/>
</dbReference>
<dbReference type="SUPFAM" id="SSF57903">
    <property type="entry name" value="FYVE/PHD zinc finger"/>
    <property type="match status" value="1"/>
</dbReference>
<dbReference type="SUPFAM" id="SSF82199">
    <property type="entry name" value="SET domain"/>
    <property type="match status" value="1"/>
</dbReference>
<dbReference type="PROSITE" id="PS51215">
    <property type="entry name" value="AWS"/>
    <property type="match status" value="1"/>
</dbReference>
<dbReference type="PROSITE" id="PS51038">
    <property type="entry name" value="BAH"/>
    <property type="match status" value="1"/>
</dbReference>
<dbReference type="PROSITE" id="PS50014">
    <property type="entry name" value="BROMODOMAIN_2"/>
    <property type="match status" value="1"/>
</dbReference>
<dbReference type="PROSITE" id="PS50868">
    <property type="entry name" value="POST_SET"/>
    <property type="match status" value="1"/>
</dbReference>
<dbReference type="PROSITE" id="PS50280">
    <property type="entry name" value="SET"/>
    <property type="match status" value="1"/>
</dbReference>
<dbReference type="PROSITE" id="PS01359">
    <property type="entry name" value="ZF_PHD_1"/>
    <property type="match status" value="1"/>
</dbReference>
<feature type="chain" id="PRO_0000259516" description="Histone-lysine N-methyltransferase ASH1L">
    <location>
        <begin position="1"/>
        <end position="2969"/>
    </location>
</feature>
<feature type="domain" description="AWS" evidence="6">
    <location>
        <begin position="2091"/>
        <end position="2142"/>
    </location>
</feature>
<feature type="domain" description="SET" evidence="4">
    <location>
        <begin position="2145"/>
        <end position="2261"/>
    </location>
</feature>
<feature type="domain" description="Post-SET" evidence="3">
    <location>
        <begin position="2269"/>
        <end position="2285"/>
    </location>
</feature>
<feature type="domain" description="Bromo" evidence="2">
    <location>
        <begin position="2444"/>
        <end position="2550"/>
    </location>
</feature>
<feature type="domain" description="BAH" evidence="5">
    <location>
        <begin position="2661"/>
        <end position="2798"/>
    </location>
</feature>
<feature type="DNA-binding region" description="A.T hook 1">
    <location>
        <begin position="887"/>
        <end position="899"/>
    </location>
</feature>
<feature type="DNA-binding region" description="A.T hook 2">
    <location>
        <begin position="1347"/>
        <end position="1359"/>
    </location>
</feature>
<feature type="DNA-binding region" description="A.T hook 3">
    <location>
        <begin position="1847"/>
        <end position="1859"/>
    </location>
</feature>
<feature type="zinc finger region" description="PHD-type">
    <location>
        <begin position="2585"/>
        <end position="2631"/>
    </location>
</feature>
<feature type="region of interest" description="Disordered" evidence="7">
    <location>
        <begin position="1"/>
        <end position="70"/>
    </location>
</feature>
<feature type="region of interest" description="Disordered" evidence="7">
    <location>
        <begin position="118"/>
        <end position="143"/>
    </location>
</feature>
<feature type="region of interest" description="Disordered" evidence="7">
    <location>
        <begin position="501"/>
        <end position="525"/>
    </location>
</feature>
<feature type="region of interest" description="Disordered" evidence="7">
    <location>
        <begin position="537"/>
        <end position="583"/>
    </location>
</feature>
<feature type="region of interest" description="Disordered" evidence="7">
    <location>
        <begin position="824"/>
        <end position="845"/>
    </location>
</feature>
<feature type="region of interest" description="Disordered" evidence="7">
    <location>
        <begin position="878"/>
        <end position="966"/>
    </location>
</feature>
<feature type="region of interest" description="Disordered" evidence="7">
    <location>
        <begin position="1100"/>
        <end position="1128"/>
    </location>
</feature>
<feature type="region of interest" description="Disordered" evidence="7">
    <location>
        <begin position="1151"/>
        <end position="1231"/>
    </location>
</feature>
<feature type="region of interest" description="Disordered" evidence="7">
    <location>
        <begin position="1243"/>
        <end position="1281"/>
    </location>
</feature>
<feature type="region of interest" description="Disordered" evidence="7">
    <location>
        <begin position="1489"/>
        <end position="1508"/>
    </location>
</feature>
<feature type="region of interest" description="Disordered" evidence="7">
    <location>
        <begin position="1580"/>
        <end position="1711"/>
    </location>
</feature>
<feature type="region of interest" description="Disordered" evidence="7">
    <location>
        <begin position="1741"/>
        <end position="1761"/>
    </location>
</feature>
<feature type="region of interest" description="Disordered" evidence="7">
    <location>
        <begin position="1911"/>
        <end position="1991"/>
    </location>
</feature>
<feature type="region of interest" description="Catalytic domain">
    <location>
        <begin position="2069"/>
        <end position="2288"/>
    </location>
</feature>
<feature type="region of interest" description="Disordered" evidence="7">
    <location>
        <begin position="2288"/>
        <end position="2346"/>
    </location>
</feature>
<feature type="region of interest" description="Disordered" evidence="7">
    <location>
        <begin position="2825"/>
        <end position="2856"/>
    </location>
</feature>
<feature type="region of interest" description="Disordered" evidence="7">
    <location>
        <begin position="2876"/>
        <end position="2919"/>
    </location>
</feature>
<feature type="compositionally biased region" description="Polar residues" evidence="7">
    <location>
        <begin position="21"/>
        <end position="31"/>
    </location>
</feature>
<feature type="compositionally biased region" description="Basic and acidic residues" evidence="7">
    <location>
        <begin position="33"/>
        <end position="65"/>
    </location>
</feature>
<feature type="compositionally biased region" description="Basic and acidic residues" evidence="7">
    <location>
        <begin position="127"/>
        <end position="143"/>
    </location>
</feature>
<feature type="compositionally biased region" description="Polar residues" evidence="7">
    <location>
        <begin position="501"/>
        <end position="511"/>
    </location>
</feature>
<feature type="compositionally biased region" description="Basic and acidic residues" evidence="7">
    <location>
        <begin position="512"/>
        <end position="522"/>
    </location>
</feature>
<feature type="compositionally biased region" description="Polar residues" evidence="7">
    <location>
        <begin position="554"/>
        <end position="579"/>
    </location>
</feature>
<feature type="compositionally biased region" description="Basic residues" evidence="7">
    <location>
        <begin position="887"/>
        <end position="897"/>
    </location>
</feature>
<feature type="compositionally biased region" description="Basic and acidic residues" evidence="7">
    <location>
        <begin position="920"/>
        <end position="932"/>
    </location>
</feature>
<feature type="compositionally biased region" description="Acidic residues" evidence="7">
    <location>
        <begin position="936"/>
        <end position="949"/>
    </location>
</feature>
<feature type="compositionally biased region" description="Low complexity" evidence="7">
    <location>
        <begin position="1100"/>
        <end position="1123"/>
    </location>
</feature>
<feature type="compositionally biased region" description="Low complexity" evidence="7">
    <location>
        <begin position="1162"/>
        <end position="1175"/>
    </location>
</feature>
<feature type="compositionally biased region" description="Polar residues" evidence="7">
    <location>
        <begin position="1186"/>
        <end position="1211"/>
    </location>
</feature>
<feature type="compositionally biased region" description="Basic residues" evidence="7">
    <location>
        <begin position="1246"/>
        <end position="1256"/>
    </location>
</feature>
<feature type="compositionally biased region" description="Basic residues" evidence="7">
    <location>
        <begin position="1266"/>
        <end position="1277"/>
    </location>
</feature>
<feature type="compositionally biased region" description="Polar residues" evidence="7">
    <location>
        <begin position="1496"/>
        <end position="1508"/>
    </location>
</feature>
<feature type="compositionally biased region" description="Polar residues" evidence="7">
    <location>
        <begin position="1580"/>
        <end position="1598"/>
    </location>
</feature>
<feature type="compositionally biased region" description="Polar residues" evidence="7">
    <location>
        <begin position="1605"/>
        <end position="1622"/>
    </location>
</feature>
<feature type="compositionally biased region" description="Polar residues" evidence="7">
    <location>
        <begin position="1650"/>
        <end position="1680"/>
    </location>
</feature>
<feature type="compositionally biased region" description="Low complexity" evidence="7">
    <location>
        <begin position="1741"/>
        <end position="1751"/>
    </location>
</feature>
<feature type="compositionally biased region" description="Polar residues" evidence="7">
    <location>
        <begin position="2289"/>
        <end position="2303"/>
    </location>
</feature>
<feature type="compositionally biased region" description="Basic residues" evidence="7">
    <location>
        <begin position="2305"/>
        <end position="2327"/>
    </location>
</feature>
<feature type="compositionally biased region" description="Polar residues" evidence="7">
    <location>
        <begin position="2335"/>
        <end position="2346"/>
    </location>
</feature>
<feature type="compositionally biased region" description="Basic and acidic residues" evidence="7">
    <location>
        <begin position="2842"/>
        <end position="2855"/>
    </location>
</feature>
<feature type="modified residue" description="Phosphoserine" evidence="19">
    <location>
        <position position="22"/>
    </location>
</feature>
<feature type="modified residue" description="N6-acetyllysine" evidence="20">
    <location>
        <position position="375"/>
    </location>
</feature>
<feature type="modified residue" description="Phosphoserine" evidence="1">
    <location>
        <position position="1162"/>
    </location>
</feature>
<feature type="modified residue" description="Phosphoserine" evidence="1">
    <location>
        <position position="1170"/>
    </location>
</feature>
<feature type="modified residue" description="N5-methylglutamine" evidence="12">
    <location>
        <position position="1220"/>
    </location>
</feature>
<feature type="modified residue" description="N6-acetyllysine" evidence="1">
    <location>
        <position position="2317"/>
    </location>
</feature>
<feature type="modified residue" description="N6-acetyllysine" evidence="1">
    <location>
        <position position="2319"/>
    </location>
</feature>
<feature type="modified residue" description="N6-acetyllysine" evidence="1">
    <location>
        <position position="2323"/>
    </location>
</feature>
<feature type="cross-link" description="Glycyl lysine isopeptide (Lys-Gly) (interchain with G-Cter in SUMO2)" evidence="21">
    <location>
        <position position="34"/>
    </location>
</feature>
<feature type="cross-link" description="Glycyl lysine isopeptide (Lys-Gly) (interchain with G-Cter in SUMO2)" evidence="21">
    <location>
        <position position="425"/>
    </location>
</feature>
<feature type="splice variant" id="VSP_039421" description="In isoform 2." evidence="16">
    <location>
        <begin position="2035"/>
        <end position="2039"/>
    </location>
</feature>
<feature type="sequence variant" id="VAR_069405" description="In dbSNP:rs186255422." evidence="10">
    <original>S</original>
    <variation>G</variation>
    <location>
        <position position="277"/>
    </location>
</feature>
<feature type="sequence variant" id="VAR_069406" description="In MRD52; uncertain significance; dbSNP:rs1293246328." evidence="10">
    <original>A</original>
    <variation>S</variation>
    <location>
        <position position="724"/>
    </location>
</feature>
<feature type="sequence variant" id="VAR_069407" description="In MRD52; uncertain significance." evidence="10">
    <original>K</original>
    <variation>R</variation>
    <location>
        <position position="972"/>
    </location>
</feature>
<feature type="sequence variant" id="VAR_069408" description="In MRD52; uncertain significance; dbSNP:rs539982914." evidence="10">
    <original>Y</original>
    <variation>H</variation>
    <location>
        <position position="1276"/>
    </location>
</feature>
<feature type="sequence variant" id="VAR_055905" description="In dbSNP:rs13373934.">
    <original>S</original>
    <variation>P</variation>
    <location>
        <position position="1416"/>
    </location>
</feature>
<feature type="sequence variant" id="VAR_028949" description="In dbSNP:rs4971053." evidence="8">
    <original>T</original>
    <variation>A</variation>
    <location>
        <position position="1771"/>
    </location>
</feature>
<feature type="sequence variant" id="VAR_069409" description="In MRD52; uncertain significance; dbSNP:rs753734834." evidence="10">
    <original>C</original>
    <variation>W</variation>
    <location>
        <position position="1775"/>
    </location>
</feature>
<feature type="sequence variant" id="VAR_080559" description="In MRD52; uncertain significance; dbSNP:rs749494995." evidence="13">
    <original>V</original>
    <variation>I</variation>
    <location>
        <position position="2085"/>
    </location>
</feature>
<feature type="sequence variant" id="VAR_080560" description="In MRD52." evidence="14">
    <location>
        <begin position="2148"/>
        <end position="2969"/>
    </location>
</feature>
<feature type="sequence variant" id="VAR_080561" description="In MRD52; uncertain significance; dbSNP:rs753029013." evidence="14">
    <original>R</original>
    <variation>H</variation>
    <location>
        <position position="2396"/>
    </location>
</feature>
<feature type="sequence variant" id="VAR_080562" description="In MRD52; dbSNP:rs1553241570." evidence="15">
    <original>A</original>
    <variation>P</variation>
    <location>
        <position position="2791"/>
    </location>
</feature>
<feature type="sequence variant" id="VAR_069410" description="In MRD52; uncertain significance." evidence="10">
    <original>D</original>
    <variation>G</variation>
    <location>
        <position position="2853"/>
    </location>
</feature>
<feature type="mutagenesis site" description="Abolishes methylation by N6AMT1." evidence="12">
    <original>Q</original>
    <variation>R</variation>
    <location>
        <position position="1220"/>
    </location>
</feature>
<feature type="sequence conflict" description="In Ref. 1; AAF68983." evidence="17" ref="1">
    <original>K</original>
    <variation>N</variation>
    <location>
        <position position="2594"/>
    </location>
</feature>
<feature type="sequence conflict" description="In Ref. 1; AAF68983." evidence="17" ref="1">
    <original>D</original>
    <variation>H</variation>
    <location>
        <position position="2697"/>
    </location>
</feature>
<feature type="helix" evidence="26">
    <location>
        <begin position="2040"/>
        <end position="2044"/>
    </location>
</feature>
<feature type="helix" evidence="26">
    <location>
        <begin position="2054"/>
        <end position="2065"/>
    </location>
</feature>
<feature type="strand" evidence="27">
    <location>
        <begin position="2081"/>
        <end position="2084"/>
    </location>
</feature>
<feature type="strand" evidence="23">
    <location>
        <begin position="2104"/>
        <end position="2106"/>
    </location>
</feature>
<feature type="strand" evidence="25">
    <location>
        <begin position="2108"/>
        <end position="2111"/>
    </location>
</feature>
<feature type="helix" evidence="27">
    <location>
        <begin position="2116"/>
        <end position="2118"/>
    </location>
</feature>
<feature type="turn" evidence="27">
    <location>
        <begin position="2124"/>
        <end position="2126"/>
    </location>
</feature>
<feature type="helix" evidence="27">
    <location>
        <begin position="2130"/>
        <end position="2132"/>
    </location>
</feature>
<feature type="strand" evidence="27">
    <location>
        <begin position="2133"/>
        <end position="2135"/>
    </location>
</feature>
<feature type="turn" evidence="27">
    <location>
        <begin position="2137"/>
        <end position="2141"/>
    </location>
</feature>
<feature type="strand" evidence="27">
    <location>
        <begin position="2147"/>
        <end position="2151"/>
    </location>
</feature>
<feature type="strand" evidence="27">
    <location>
        <begin position="2155"/>
        <end position="2163"/>
    </location>
</feature>
<feature type="strand" evidence="27">
    <location>
        <begin position="2170"/>
        <end position="2173"/>
    </location>
</feature>
<feature type="strand" evidence="27">
    <location>
        <begin position="2177"/>
        <end position="2180"/>
    </location>
</feature>
<feature type="helix" evidence="27">
    <location>
        <begin position="2181"/>
        <end position="2190"/>
    </location>
</feature>
<feature type="helix" evidence="27">
    <location>
        <begin position="2192"/>
        <end position="2194"/>
    </location>
</feature>
<feature type="helix" evidence="25">
    <location>
        <begin position="2195"/>
        <end position="2197"/>
    </location>
</feature>
<feature type="strand" evidence="27">
    <location>
        <begin position="2200"/>
        <end position="2204"/>
    </location>
</feature>
<feature type="strand" evidence="27">
    <location>
        <begin position="2207"/>
        <end position="2210"/>
    </location>
</feature>
<feature type="strand" evidence="27">
    <location>
        <begin position="2212"/>
        <end position="2215"/>
    </location>
</feature>
<feature type="helix" evidence="27">
    <location>
        <begin position="2217"/>
        <end position="2220"/>
    </location>
</feature>
<feature type="strand" evidence="27">
    <location>
        <begin position="2228"/>
        <end position="2236"/>
    </location>
</feature>
<feature type="strand" evidence="27">
    <location>
        <begin position="2239"/>
        <end position="2248"/>
    </location>
</feature>
<feature type="helix" evidence="27">
    <location>
        <begin position="2260"/>
        <end position="2263"/>
    </location>
</feature>
<feature type="strand" evidence="24">
    <location>
        <begin position="2282"/>
        <end position="2284"/>
    </location>
</feature>
<feature type="helix" evidence="22">
    <location>
        <begin position="2438"/>
        <end position="2458"/>
    </location>
</feature>
<feature type="helix" evidence="22">
    <location>
        <begin position="2469"/>
        <end position="2471"/>
    </location>
</feature>
<feature type="helix" evidence="22">
    <location>
        <begin position="2477"/>
        <end position="2479"/>
    </location>
</feature>
<feature type="helix" evidence="22">
    <location>
        <begin position="2483"/>
        <end position="2486"/>
    </location>
</feature>
<feature type="helix" evidence="22">
    <location>
        <begin position="2493"/>
        <end position="2501"/>
    </location>
</feature>
<feature type="helix" evidence="22">
    <location>
        <begin position="2508"/>
        <end position="2526"/>
    </location>
</feature>
<feature type="helix" evidence="22">
    <location>
        <begin position="2531"/>
        <end position="2558"/>
    </location>
</feature>
<accession>Q9NR48</accession>
<accession>Q59GP1</accession>
<accession>Q5T714</accession>
<accession>Q5T715</accession>
<accession>Q9P2C7</accession>
<organism>
    <name type="scientific">Homo sapiens</name>
    <name type="common">Human</name>
    <dbReference type="NCBI Taxonomy" id="9606"/>
    <lineage>
        <taxon>Eukaryota</taxon>
        <taxon>Metazoa</taxon>
        <taxon>Chordata</taxon>
        <taxon>Craniata</taxon>
        <taxon>Vertebrata</taxon>
        <taxon>Euteleostomi</taxon>
        <taxon>Mammalia</taxon>
        <taxon>Eutheria</taxon>
        <taxon>Euarchontoglires</taxon>
        <taxon>Primates</taxon>
        <taxon>Haplorrhini</taxon>
        <taxon>Catarrhini</taxon>
        <taxon>Hominidae</taxon>
        <taxon>Homo</taxon>
    </lineage>
</organism>
<comment type="function">
    <text evidence="1 9">Histone methyltransferase specifically trimethylating 'Lys-36' of histone H3 forming H3K36me3 (PubMed:21239497). Also monomethylates 'Lys-9' of histone H3 (H3K9me1) in vitro (By similarity). The physiological significance of the H3K9me1 activity is unclear (By similarity).</text>
</comment>
<comment type="catalytic activity">
    <reaction evidence="9">
        <text>L-lysyl(36)-[histone H3] + 3 S-adenosyl-L-methionine = N(6),N(6),N(6)-trimethyl-L-lysyl(36)-[histone H3] + 3 S-adenosyl-L-homocysteine + 3 H(+)</text>
        <dbReference type="Rhea" id="RHEA:60324"/>
        <dbReference type="Rhea" id="RHEA-COMP:9785"/>
        <dbReference type="Rhea" id="RHEA-COMP:15536"/>
        <dbReference type="ChEBI" id="CHEBI:15378"/>
        <dbReference type="ChEBI" id="CHEBI:29969"/>
        <dbReference type="ChEBI" id="CHEBI:57856"/>
        <dbReference type="ChEBI" id="CHEBI:59789"/>
        <dbReference type="ChEBI" id="CHEBI:61961"/>
        <dbReference type="EC" id="2.1.1.359"/>
    </reaction>
</comment>
<comment type="catalytic activity">
    <reaction evidence="1">
        <text>L-lysyl(9)-[histone H3] + S-adenosyl-L-methionine = N(6)-methyl-L-lysyl(9)-[histone H3] + S-adenosyl-L-homocysteine + H(+)</text>
        <dbReference type="Rhea" id="RHEA:60280"/>
        <dbReference type="Rhea" id="RHEA-COMP:15542"/>
        <dbReference type="Rhea" id="RHEA-COMP:15546"/>
        <dbReference type="ChEBI" id="CHEBI:15378"/>
        <dbReference type="ChEBI" id="CHEBI:29969"/>
        <dbReference type="ChEBI" id="CHEBI:57856"/>
        <dbReference type="ChEBI" id="CHEBI:59789"/>
        <dbReference type="ChEBI" id="CHEBI:61929"/>
        <dbReference type="EC" id="2.1.1.367"/>
    </reaction>
</comment>
<comment type="subcellular location">
    <subcellularLocation>
        <location evidence="8 11">Nucleus</location>
    </subcellularLocation>
    <subcellularLocation>
        <location evidence="8">Cell junction</location>
        <location evidence="8">Tight junction</location>
    </subcellularLocation>
    <subcellularLocation>
        <location evidence="18">Chromosome</location>
    </subcellularLocation>
    <text evidence="8">The relevance of tight junction localization is however unclear.</text>
</comment>
<comment type="alternative products">
    <event type="alternative splicing"/>
    <isoform>
        <id>Q9NR48-1</id>
        <name>1</name>
        <sequence type="displayed"/>
    </isoform>
    <isoform>
        <id>Q9NR48-2</id>
        <name>2</name>
        <sequence type="described" ref="VSP_039421"/>
    </isoform>
</comment>
<comment type="tissue specificity">
    <text evidence="8">Widely expressed, with highest level in brain, heart and kidney.</text>
</comment>
<comment type="PTM">
    <text evidence="12">Methylated at Gln-1220 by N6AMT1.</text>
</comment>
<comment type="disease" evidence="10 13 14 15">
    <disease id="DI-05153">
        <name>Intellectual developmental disorder, autosomal dominant 52</name>
        <acronym>MRD52</acronym>
        <description>A disorder characterized by significantly below average general intellectual functioning associated with impairments in adaptive behavior and manifested during the developmental period.</description>
        <dbReference type="MIM" id="617796"/>
    </disease>
    <text>The disease is caused by variants affecting the gene represented in this entry.</text>
</comment>
<comment type="similarity">
    <text evidence="4">Belongs to the class V-like SAM-binding methyltransferase superfamily. Histone-lysine methyltransferase family. SET2 subfamily.</text>
</comment>
<comment type="sequence caution" evidence="17">
    <conflict type="erroneous initiation">
        <sequence resource="EMBL-CDS" id="BAA92658"/>
    </conflict>
    <text>Extended N-terminus.</text>
</comment>
<name>ASH1L_HUMAN</name>
<gene>
    <name type="primary">ASH1L</name>
    <name type="synonym">KIAA1420</name>
    <name type="synonym">KMT2H</name>
</gene>
<proteinExistence type="evidence at protein level"/>
<keyword id="KW-0002">3D-structure</keyword>
<keyword id="KW-0007">Acetylation</keyword>
<keyword id="KW-0010">Activator</keyword>
<keyword id="KW-0025">Alternative splicing</keyword>
<keyword id="KW-0103">Bromodomain</keyword>
<keyword id="KW-0965">Cell junction</keyword>
<keyword id="KW-0156">Chromatin regulator</keyword>
<keyword id="KW-0158">Chromosome</keyword>
<keyword id="KW-0225">Disease variant</keyword>
<keyword id="KW-0991">Intellectual disability</keyword>
<keyword id="KW-1017">Isopeptide bond</keyword>
<keyword id="KW-0479">Metal-binding</keyword>
<keyword id="KW-0488">Methylation</keyword>
<keyword id="KW-0489">Methyltransferase</keyword>
<keyword id="KW-0539">Nucleus</keyword>
<keyword id="KW-0597">Phosphoprotein</keyword>
<keyword id="KW-1267">Proteomics identification</keyword>
<keyword id="KW-1185">Reference proteome</keyword>
<keyword id="KW-0677">Repeat</keyword>
<keyword id="KW-0949">S-adenosyl-L-methionine</keyword>
<keyword id="KW-0796">Tight junction</keyword>
<keyword id="KW-0804">Transcription</keyword>
<keyword id="KW-0805">Transcription regulation</keyword>
<keyword id="KW-0808">Transferase</keyword>
<keyword id="KW-0832">Ubl conjugation</keyword>
<keyword id="KW-0862">Zinc</keyword>
<keyword id="KW-0863">Zinc-finger</keyword>